<organism>
    <name type="scientific">Homo sapiens</name>
    <name type="common">Human</name>
    <dbReference type="NCBI Taxonomy" id="9606"/>
    <lineage>
        <taxon>Eukaryota</taxon>
        <taxon>Metazoa</taxon>
        <taxon>Chordata</taxon>
        <taxon>Craniata</taxon>
        <taxon>Vertebrata</taxon>
        <taxon>Euteleostomi</taxon>
        <taxon>Mammalia</taxon>
        <taxon>Eutheria</taxon>
        <taxon>Euarchontoglires</taxon>
        <taxon>Primates</taxon>
        <taxon>Haplorrhini</taxon>
        <taxon>Catarrhini</taxon>
        <taxon>Hominidae</taxon>
        <taxon>Homo</taxon>
    </lineage>
</organism>
<proteinExistence type="evidence at protein level"/>
<name>CLIC6_HUMAN</name>
<reference key="1">
    <citation type="journal article" date="2003" name="Gene">
        <title>Identification of a novel member of the CLIC family, CLIC6, mapping to 21q22.12.</title>
        <authorList>
            <person name="Friedli M."/>
            <person name="Guipponi M."/>
            <person name="Bertrand S."/>
            <person name="Bertrand D."/>
            <person name="Neerman-Arbez M."/>
            <person name="Scott H.S."/>
            <person name="Antonarakis S.E."/>
            <person name="Reymond A."/>
        </authorList>
    </citation>
    <scope>NUCLEOTIDE SEQUENCE [MRNA] (ISOFORMS A AND B)</scope>
    <scope>ALTERNATIVE SPLICING</scope>
</reference>
<reference key="2">
    <citation type="journal article" date="2002" name="Mamm. Genome">
        <title>Segmental paralogy in the human genome: a large-scale triplication on 1p, 6p, and 21q.</title>
        <authorList>
            <person name="Strippoli P."/>
            <person name="D'Addabbo P."/>
            <person name="Lenzi L."/>
            <person name="Giannone S."/>
            <person name="Canaider S."/>
            <person name="Casadei R."/>
            <person name="Vitale L."/>
            <person name="Carinci P."/>
            <person name="Zannotti M."/>
        </authorList>
    </citation>
    <scope>NUCLEOTIDE SEQUENCE [MRNA] (ISOFORM A)</scope>
    <scope>TISSUE SPECIFICITY</scope>
</reference>
<reference key="3">
    <citation type="journal article" date="2004" name="Nat. Genet.">
        <title>Complete sequencing and characterization of 21,243 full-length human cDNAs.</title>
        <authorList>
            <person name="Ota T."/>
            <person name="Suzuki Y."/>
            <person name="Nishikawa T."/>
            <person name="Otsuki T."/>
            <person name="Sugiyama T."/>
            <person name="Irie R."/>
            <person name="Wakamatsu A."/>
            <person name="Hayashi K."/>
            <person name="Sato H."/>
            <person name="Nagai K."/>
            <person name="Kimura K."/>
            <person name="Makita H."/>
            <person name="Sekine M."/>
            <person name="Obayashi M."/>
            <person name="Nishi T."/>
            <person name="Shibahara T."/>
            <person name="Tanaka T."/>
            <person name="Ishii S."/>
            <person name="Yamamoto J."/>
            <person name="Saito K."/>
            <person name="Kawai Y."/>
            <person name="Isono Y."/>
            <person name="Nakamura Y."/>
            <person name="Nagahari K."/>
            <person name="Murakami K."/>
            <person name="Yasuda T."/>
            <person name="Iwayanagi T."/>
            <person name="Wagatsuma M."/>
            <person name="Shiratori A."/>
            <person name="Sudo H."/>
            <person name="Hosoiri T."/>
            <person name="Kaku Y."/>
            <person name="Kodaira H."/>
            <person name="Kondo H."/>
            <person name="Sugawara M."/>
            <person name="Takahashi M."/>
            <person name="Kanda K."/>
            <person name="Yokoi T."/>
            <person name="Furuya T."/>
            <person name="Kikkawa E."/>
            <person name="Omura Y."/>
            <person name="Abe K."/>
            <person name="Kamihara K."/>
            <person name="Katsuta N."/>
            <person name="Sato K."/>
            <person name="Tanikawa M."/>
            <person name="Yamazaki M."/>
            <person name="Ninomiya K."/>
            <person name="Ishibashi T."/>
            <person name="Yamashita H."/>
            <person name="Murakawa K."/>
            <person name="Fujimori K."/>
            <person name="Tanai H."/>
            <person name="Kimata M."/>
            <person name="Watanabe M."/>
            <person name="Hiraoka S."/>
            <person name="Chiba Y."/>
            <person name="Ishida S."/>
            <person name="Ono Y."/>
            <person name="Takiguchi S."/>
            <person name="Watanabe S."/>
            <person name="Yosida M."/>
            <person name="Hotuta T."/>
            <person name="Kusano J."/>
            <person name="Kanehori K."/>
            <person name="Takahashi-Fujii A."/>
            <person name="Hara H."/>
            <person name="Tanase T.-O."/>
            <person name="Nomura Y."/>
            <person name="Togiya S."/>
            <person name="Komai F."/>
            <person name="Hara R."/>
            <person name="Takeuchi K."/>
            <person name="Arita M."/>
            <person name="Imose N."/>
            <person name="Musashino K."/>
            <person name="Yuuki H."/>
            <person name="Oshima A."/>
            <person name="Sasaki N."/>
            <person name="Aotsuka S."/>
            <person name="Yoshikawa Y."/>
            <person name="Matsunawa H."/>
            <person name="Ichihara T."/>
            <person name="Shiohata N."/>
            <person name="Sano S."/>
            <person name="Moriya S."/>
            <person name="Momiyama H."/>
            <person name="Satoh N."/>
            <person name="Takami S."/>
            <person name="Terashima Y."/>
            <person name="Suzuki O."/>
            <person name="Nakagawa S."/>
            <person name="Senoh A."/>
            <person name="Mizoguchi H."/>
            <person name="Goto Y."/>
            <person name="Shimizu F."/>
            <person name="Wakebe H."/>
            <person name="Hishigaki H."/>
            <person name="Watanabe T."/>
            <person name="Sugiyama A."/>
            <person name="Takemoto M."/>
            <person name="Kawakami B."/>
            <person name="Yamazaki M."/>
            <person name="Watanabe K."/>
            <person name="Kumagai A."/>
            <person name="Itakura S."/>
            <person name="Fukuzumi Y."/>
            <person name="Fujimori Y."/>
            <person name="Komiyama M."/>
            <person name="Tashiro H."/>
            <person name="Tanigami A."/>
            <person name="Fujiwara T."/>
            <person name="Ono T."/>
            <person name="Yamada K."/>
            <person name="Fujii Y."/>
            <person name="Ozaki K."/>
            <person name="Hirao M."/>
            <person name="Ohmori Y."/>
            <person name="Kawabata A."/>
            <person name="Hikiji T."/>
            <person name="Kobatake N."/>
            <person name="Inagaki H."/>
            <person name="Ikema Y."/>
            <person name="Okamoto S."/>
            <person name="Okitani R."/>
            <person name="Kawakami T."/>
            <person name="Noguchi S."/>
            <person name="Itoh T."/>
            <person name="Shigeta K."/>
            <person name="Senba T."/>
            <person name="Matsumura K."/>
            <person name="Nakajima Y."/>
            <person name="Mizuno T."/>
            <person name="Morinaga M."/>
            <person name="Sasaki M."/>
            <person name="Togashi T."/>
            <person name="Oyama M."/>
            <person name="Hata H."/>
            <person name="Watanabe M."/>
            <person name="Komatsu T."/>
            <person name="Mizushima-Sugano J."/>
            <person name="Satoh T."/>
            <person name="Shirai Y."/>
            <person name="Takahashi Y."/>
            <person name="Nakagawa K."/>
            <person name="Okumura K."/>
            <person name="Nagase T."/>
            <person name="Nomura N."/>
            <person name="Kikuchi H."/>
            <person name="Masuho Y."/>
            <person name="Yamashita R."/>
            <person name="Nakai K."/>
            <person name="Yada T."/>
            <person name="Nakamura Y."/>
            <person name="Ohara O."/>
            <person name="Isogai T."/>
            <person name="Sugano S."/>
        </authorList>
    </citation>
    <scope>NUCLEOTIDE SEQUENCE [LARGE SCALE MRNA] (ISOFORM A)</scope>
    <source>
        <tissue>Amygdala</tissue>
        <tissue>Small intestine</tissue>
    </source>
</reference>
<reference key="4">
    <citation type="journal article" date="2000" name="Nature">
        <title>The DNA sequence of human chromosome 21.</title>
        <authorList>
            <person name="Hattori M."/>
            <person name="Fujiyama A."/>
            <person name="Taylor T.D."/>
            <person name="Watanabe H."/>
            <person name="Yada T."/>
            <person name="Park H.-S."/>
            <person name="Toyoda A."/>
            <person name="Ishii K."/>
            <person name="Totoki Y."/>
            <person name="Choi D.-K."/>
            <person name="Groner Y."/>
            <person name="Soeda E."/>
            <person name="Ohki M."/>
            <person name="Takagi T."/>
            <person name="Sakaki Y."/>
            <person name="Taudien S."/>
            <person name="Blechschmidt K."/>
            <person name="Polley A."/>
            <person name="Menzel U."/>
            <person name="Delabar J."/>
            <person name="Kumpf K."/>
            <person name="Lehmann R."/>
            <person name="Patterson D."/>
            <person name="Reichwald K."/>
            <person name="Rump A."/>
            <person name="Schillhabel M."/>
            <person name="Schudy A."/>
            <person name="Zimmermann W."/>
            <person name="Rosenthal A."/>
            <person name="Kudoh J."/>
            <person name="Shibuya K."/>
            <person name="Kawasaki K."/>
            <person name="Asakawa S."/>
            <person name="Shintani A."/>
            <person name="Sasaki T."/>
            <person name="Nagamine K."/>
            <person name="Mitsuyama S."/>
            <person name="Antonarakis S.E."/>
            <person name="Minoshima S."/>
            <person name="Shimizu N."/>
            <person name="Nordsiek G."/>
            <person name="Hornischer K."/>
            <person name="Brandt P."/>
            <person name="Scharfe M."/>
            <person name="Schoen O."/>
            <person name="Desario A."/>
            <person name="Reichelt J."/>
            <person name="Kauer G."/>
            <person name="Bloecker H."/>
            <person name="Ramser J."/>
            <person name="Beck A."/>
            <person name="Klages S."/>
            <person name="Hennig S."/>
            <person name="Riesselmann L."/>
            <person name="Dagand E."/>
            <person name="Wehrmeyer S."/>
            <person name="Borzym K."/>
            <person name="Gardiner K."/>
            <person name="Nizetic D."/>
            <person name="Francis F."/>
            <person name="Lehrach H."/>
            <person name="Reinhardt R."/>
            <person name="Yaspo M.-L."/>
        </authorList>
    </citation>
    <scope>NUCLEOTIDE SEQUENCE [LARGE SCALE GENOMIC DNA]</scope>
</reference>
<reference key="5">
    <citation type="submission" date="2005-09" db="EMBL/GenBank/DDBJ databases">
        <authorList>
            <person name="Mural R.J."/>
            <person name="Istrail S."/>
            <person name="Sutton G.G."/>
            <person name="Florea L."/>
            <person name="Halpern A.L."/>
            <person name="Mobarry C.M."/>
            <person name="Lippert R."/>
            <person name="Walenz B."/>
            <person name="Shatkay H."/>
            <person name="Dew I."/>
            <person name="Miller J.R."/>
            <person name="Flanigan M.J."/>
            <person name="Edwards N.J."/>
            <person name="Bolanos R."/>
            <person name="Fasulo D."/>
            <person name="Halldorsson B.V."/>
            <person name="Hannenhalli S."/>
            <person name="Turner R."/>
            <person name="Yooseph S."/>
            <person name="Lu F."/>
            <person name="Nusskern D.R."/>
            <person name="Shue B.C."/>
            <person name="Zheng X.H."/>
            <person name="Zhong F."/>
            <person name="Delcher A.L."/>
            <person name="Huson D.H."/>
            <person name="Kravitz S.A."/>
            <person name="Mouchard L."/>
            <person name="Reinert K."/>
            <person name="Remington K.A."/>
            <person name="Clark A.G."/>
            <person name="Waterman M.S."/>
            <person name="Eichler E.E."/>
            <person name="Adams M.D."/>
            <person name="Hunkapiller M.W."/>
            <person name="Myers E.W."/>
            <person name="Venter J.C."/>
        </authorList>
    </citation>
    <scope>NUCLEOTIDE SEQUENCE [LARGE SCALE GENOMIC DNA]</scope>
</reference>
<reference key="6">
    <citation type="journal article" date="2004" name="Genome Res.">
        <title>The status, quality, and expansion of the NIH full-length cDNA project: the Mammalian Gene Collection (MGC).</title>
        <authorList>
            <consortium name="The MGC Project Team"/>
        </authorList>
    </citation>
    <scope>NUCLEOTIDE SEQUENCE [LARGE SCALE MRNA] OF 279-704 (ISOFORM A)</scope>
    <source>
        <tissue>Brain</tissue>
    </source>
</reference>
<reference key="7">
    <citation type="journal article" date="2023" name="J. Biol. Chem.">
        <title>Biophysical characterization of chloride intracellular channel 6 (CLIC6).</title>
        <authorList>
            <person name="Loyo-Celis V."/>
            <person name="Patel D."/>
            <person name="Sanghvi S."/>
            <person name="Kaur K."/>
            <person name="Ponnalagu D."/>
            <person name="Zheng Y."/>
            <person name="Bindra S."/>
            <person name="Bhachu H.R."/>
            <person name="Deschenes I."/>
            <person name="Gururaja Rao S."/>
            <person name="Singh H."/>
        </authorList>
    </citation>
    <scope>FUNCTION</scope>
    <scope>TRANSPORTER ACTIVITY</scope>
    <scope>ACTIVITY REGULATION</scope>
    <scope>TISSUE SPECIFICITY</scope>
    <scope>MUTAGENESIS OF HIS-648</scope>
</reference>
<evidence type="ECO:0000250" key="1"/>
<evidence type="ECO:0000250" key="2">
    <source>
        <dbReference type="UniProtKB" id="Q811Q2"/>
    </source>
</evidence>
<evidence type="ECO:0000250" key="3">
    <source>
        <dbReference type="UniProtKB" id="Q8BHB9"/>
    </source>
</evidence>
<evidence type="ECO:0000250" key="4">
    <source>
        <dbReference type="UniProtKB" id="Q9N2G5"/>
    </source>
</evidence>
<evidence type="ECO:0000250" key="5">
    <source>
        <dbReference type="UniProtKB" id="Q9Y696"/>
    </source>
</evidence>
<evidence type="ECO:0000255" key="6"/>
<evidence type="ECO:0000255" key="7">
    <source>
        <dbReference type="PROSITE-ProRule" id="PRU00685"/>
    </source>
</evidence>
<evidence type="ECO:0000256" key="8">
    <source>
        <dbReference type="SAM" id="MobiDB-lite"/>
    </source>
</evidence>
<evidence type="ECO:0000269" key="9">
    <source>
    </source>
</evidence>
<evidence type="ECO:0000269" key="10">
    <source>
    </source>
</evidence>
<evidence type="ECO:0000303" key="11">
    <source>
    </source>
</evidence>
<evidence type="ECO:0000303" key="12">
    <source>
    </source>
</evidence>
<evidence type="ECO:0000303" key="13">
    <source>
    </source>
</evidence>
<evidence type="ECO:0000303" key="14">
    <source>
    </source>
</evidence>
<evidence type="ECO:0000303" key="15">
    <source>
    </source>
</evidence>
<evidence type="ECO:0000305" key="16"/>
<evidence type="ECO:0000312" key="17">
    <source>
        <dbReference type="HGNC" id="HGNC:2065"/>
    </source>
</evidence>
<keyword id="KW-0025">Alternative splicing</keyword>
<keyword id="KW-1003">Cell membrane</keyword>
<keyword id="KW-0868">Chloride</keyword>
<keyword id="KW-0869">Chloride channel</keyword>
<keyword id="KW-0963">Cytoplasm</keyword>
<keyword id="KW-0407">Ion channel</keyword>
<keyword id="KW-0406">Ion transport</keyword>
<keyword id="KW-0472">Membrane</keyword>
<keyword id="KW-0560">Oxidoreductase</keyword>
<keyword id="KW-0597">Phosphoprotein</keyword>
<keyword id="KW-1267">Proteomics identification</keyword>
<keyword id="KW-1185">Reference proteome</keyword>
<keyword id="KW-0677">Repeat</keyword>
<keyword id="KW-0812">Transmembrane</keyword>
<keyword id="KW-1133">Transmembrane helix</keyword>
<keyword id="KW-0813">Transport</keyword>
<keyword id="KW-0851">Voltage-gated channel</keyword>
<feature type="chain" id="PRO_0000144217" description="Chloride intracellular channel protein 6">
    <location>
        <begin position="1"/>
        <end position="704"/>
    </location>
</feature>
<feature type="transmembrane region" description="Helical; Note=After insertion into the membrane" evidence="6">
    <location>
        <begin position="489"/>
        <end position="509"/>
    </location>
</feature>
<feature type="repeat" description="1">
    <location>
        <begin position="157"/>
        <end position="166"/>
    </location>
</feature>
<feature type="repeat" description="2">
    <location>
        <begin position="167"/>
        <end position="176"/>
    </location>
</feature>
<feature type="repeat" description="3">
    <location>
        <begin position="177"/>
        <end position="186"/>
    </location>
</feature>
<feature type="repeat" description="4">
    <location>
        <begin position="187"/>
        <end position="196"/>
    </location>
</feature>
<feature type="repeat" description="5">
    <location>
        <begin position="197"/>
        <end position="206"/>
    </location>
</feature>
<feature type="repeat" description="6">
    <location>
        <begin position="207"/>
        <end position="216"/>
    </location>
</feature>
<feature type="repeat" description="7">
    <location>
        <begin position="217"/>
        <end position="226"/>
    </location>
</feature>
<feature type="repeat" description="8">
    <location>
        <begin position="227"/>
        <end position="236"/>
    </location>
</feature>
<feature type="repeat" description="9">
    <location>
        <begin position="237"/>
        <end position="246"/>
    </location>
</feature>
<feature type="repeat" description="10">
    <location>
        <begin position="247"/>
        <end position="256"/>
    </location>
</feature>
<feature type="repeat" description="11">
    <location>
        <begin position="257"/>
        <end position="266"/>
    </location>
</feature>
<feature type="repeat" description="12">
    <location>
        <begin position="267"/>
        <end position="276"/>
    </location>
</feature>
<feature type="repeat" description="13">
    <location>
        <begin position="277"/>
        <end position="286"/>
    </location>
</feature>
<feature type="domain" description="GST C-terminal" evidence="7">
    <location>
        <begin position="556"/>
        <end position="704"/>
    </location>
</feature>
<feature type="region of interest" description="Disordered" evidence="8">
    <location>
        <begin position="1"/>
        <end position="446"/>
    </location>
</feature>
<feature type="region of interest" description="13 X 10 AA tandem repeat of G-D-[SNG]-[VIM]-[DEQ]-A-[EAG]-[GDVE]-[PRG]-[LAVP]">
    <location>
        <begin position="157"/>
        <end position="282"/>
    </location>
</feature>
<feature type="short sequence motif" description="G-site" evidence="5">
    <location>
        <begin position="487"/>
        <end position="490"/>
    </location>
</feature>
<feature type="compositionally biased region" description="Low complexity" evidence="8">
    <location>
        <begin position="1"/>
        <end position="13"/>
    </location>
</feature>
<feature type="compositionally biased region" description="Acidic residues" evidence="8">
    <location>
        <begin position="39"/>
        <end position="48"/>
    </location>
</feature>
<feature type="compositionally biased region" description="Basic and acidic residues" evidence="8">
    <location>
        <begin position="67"/>
        <end position="83"/>
    </location>
</feature>
<feature type="compositionally biased region" description="Low complexity" evidence="8">
    <location>
        <begin position="90"/>
        <end position="100"/>
    </location>
</feature>
<feature type="compositionally biased region" description="Basic and acidic residues" evidence="8">
    <location>
        <begin position="121"/>
        <end position="147"/>
    </location>
</feature>
<feature type="compositionally biased region" description="Polar residues" evidence="8">
    <location>
        <begin position="295"/>
        <end position="306"/>
    </location>
</feature>
<feature type="compositionally biased region" description="Basic and acidic residues" evidence="8">
    <location>
        <begin position="350"/>
        <end position="360"/>
    </location>
</feature>
<feature type="compositionally biased region" description="Basic and acidic residues" evidence="8">
    <location>
        <begin position="371"/>
        <end position="385"/>
    </location>
</feature>
<feature type="compositionally biased region" description="Basic and acidic residues" evidence="8">
    <location>
        <begin position="434"/>
        <end position="446"/>
    </location>
</feature>
<feature type="modified residue" description="Phosphoserine" evidence="2">
    <location>
        <position position="44"/>
    </location>
</feature>
<feature type="modified residue" description="Phosphoserine" evidence="2">
    <location>
        <position position="397"/>
    </location>
</feature>
<feature type="modified residue" description="Phosphoserine" evidence="2">
    <location>
        <position position="442"/>
    </location>
</feature>
<feature type="splice variant" id="VSP_008963" description="In isoform A." evidence="11 12 13 14">
    <location>
        <begin position="459"/>
        <end position="476"/>
    </location>
</feature>
<feature type="sequence variant" id="VAR_014139" description="In dbSNP:rs3171439.">
    <original>D</original>
    <variation>G</variation>
    <location>
        <position position="632"/>
    </location>
</feature>
<feature type="mutagenesis site" description="Decreases channel conductance and abolishes its dependence on pH." evidence="10">
    <original>H</original>
    <variation>A</variation>
    <location>
        <position position="648"/>
    </location>
</feature>
<protein>
    <recommendedName>
        <fullName>Chloride intracellular channel protein 6</fullName>
    </recommendedName>
    <alternativeName>
        <fullName evidence="5">Glutaredoxin-like oxidoreductase CLIC6</fullName>
        <ecNumber evidence="5">1.8.-.-</ecNumber>
    </alternativeName>
    <alternativeName>
        <fullName evidence="15">Parchorin</fullName>
    </alternativeName>
</protein>
<sequence length="704" mass="73012">MAEAAEPEGVAPGPQGPPEVPAPLAERPGEPGAAGGEAEGPEGSEGAEEAPRGAAAVKEAGGGGPDRGPEAEARGTRGAHGETEAEEGAPEGAEVPQGGEETSGAQQVEGASPGRGAQGEPRGEAQREPEDSAAPERQEEAEQRPEVPEGSASGEAGDSVDAEGPLGDNIEAEGPAGDSVEAEGRVGDSVDAEGPAGDSVDAEGPLGDNIQAEGPAGDSVDAEGRVGDSVDAEGPAGDSVDAEGRVGDSVEAGDPAGDGVEAGVPAGDSVEAEGPAGDSMDAEGPAGRARRVSGEPQQSGDGSLSPQAEAIEVAAGESAGRSPGELAWDAAEEAEVPGVKGSEEAAPGDARADAGEDRVGDGPQQEPGEDEERRERSPEGPREEEAAGGEEESPDSSPHGEASRGAAEPEAQLSNHLAEEGPAEGSGEAARVNGRREDGEASEPRALGQEHDITLFVKVKLTALGCSRIAIKKYLRAGYDGESIGNCPFSQRLFMILWLKGVIFNVTTVDLKRKPADLQNLAPGTNPPFMTFDGEVKTDVNKIEEFLEEKLAPPRYPKLGTQHPESNSAGNDVFAKFSAFIKNTKKDANEIHEKNLLKALRKLDNYLNSPLPDEIDAYSTEDVTVSGRKFLDGDELTLADCNLLPKLHIIKIVAKKYRDFEFPSEMTGIWRYLNNAYARDEFTNTCPADQEIEHAYSDVAKRMK</sequence>
<accession>Q96NY7</accession>
<accession>A8K0U8</accession>
<accession>Q8IX31</accession>
<dbReference type="EC" id="1.8.-.-" evidence="5"/>
<dbReference type="EMBL" id="AF448439">
    <property type="protein sequence ID" value="AAN76730.1"/>
    <property type="molecule type" value="mRNA"/>
</dbReference>
<dbReference type="EMBL" id="AF448438">
    <property type="protein sequence ID" value="AAN76729.1"/>
    <property type="molecule type" value="mRNA"/>
</dbReference>
<dbReference type="EMBL" id="AF426169">
    <property type="protein sequence ID" value="AAL24813.1"/>
    <property type="molecule type" value="mRNA"/>
</dbReference>
<dbReference type="EMBL" id="AK092733">
    <property type="protein sequence ID" value="BAC03959.1"/>
    <property type="status" value="ALT_INIT"/>
    <property type="molecule type" value="mRNA"/>
</dbReference>
<dbReference type="EMBL" id="AK289663">
    <property type="protein sequence ID" value="BAF82352.1"/>
    <property type="molecule type" value="mRNA"/>
</dbReference>
<dbReference type="EMBL" id="AP001720">
    <property type="status" value="NOT_ANNOTATED_CDS"/>
    <property type="molecule type" value="Genomic_DNA"/>
</dbReference>
<dbReference type="EMBL" id="CH471079">
    <property type="protein sequence ID" value="EAX09775.1"/>
    <property type="molecule type" value="Genomic_DNA"/>
</dbReference>
<dbReference type="EMBL" id="BC040196">
    <property type="protein sequence ID" value="AAH40196.1"/>
    <property type="molecule type" value="mRNA"/>
</dbReference>
<dbReference type="CCDS" id="CCDS13638.1">
    <molecule id="Q96NY7-2"/>
</dbReference>
<dbReference type="CCDS" id="CCDS82669.1">
    <molecule id="Q96NY7-1"/>
</dbReference>
<dbReference type="RefSeq" id="NP_001303938.1">
    <molecule id="Q96NY7-1"/>
    <property type="nucleotide sequence ID" value="NM_001317009.2"/>
</dbReference>
<dbReference type="RefSeq" id="NP_444507.1">
    <molecule id="Q96NY7-2"/>
    <property type="nucleotide sequence ID" value="NM_053277.3"/>
</dbReference>
<dbReference type="SMR" id="Q96NY7"/>
<dbReference type="BioGRID" id="119900">
    <property type="interactions" value="28"/>
</dbReference>
<dbReference type="FunCoup" id="Q96NY7">
    <property type="interactions" value="33"/>
</dbReference>
<dbReference type="IntAct" id="Q96NY7">
    <property type="interactions" value="25"/>
</dbReference>
<dbReference type="STRING" id="9606.ENSP00000353959"/>
<dbReference type="TCDB" id="1.A.12.1.4">
    <property type="family name" value="the intracellular chloride channel (clic) family"/>
</dbReference>
<dbReference type="GlyGen" id="Q96NY7">
    <property type="glycosylation" value="1 site"/>
</dbReference>
<dbReference type="iPTMnet" id="Q96NY7"/>
<dbReference type="PhosphoSitePlus" id="Q96NY7"/>
<dbReference type="BioMuta" id="CLIC6"/>
<dbReference type="DMDM" id="38372885"/>
<dbReference type="jPOST" id="Q96NY7"/>
<dbReference type="MassIVE" id="Q96NY7"/>
<dbReference type="PaxDb" id="9606-ENSP00000290332"/>
<dbReference type="PeptideAtlas" id="Q96NY7"/>
<dbReference type="ProteomicsDB" id="77576">
    <molecule id="Q96NY7-1"/>
</dbReference>
<dbReference type="ProteomicsDB" id="77577">
    <molecule id="Q96NY7-2"/>
</dbReference>
<dbReference type="Pumba" id="Q96NY7"/>
<dbReference type="Antibodypedia" id="8114">
    <property type="antibodies" value="195 antibodies from 26 providers"/>
</dbReference>
<dbReference type="DNASU" id="54102"/>
<dbReference type="Ensembl" id="ENST00000349499.3">
    <molecule id="Q96NY7-2"/>
    <property type="protein sequence ID" value="ENSP00000290332.4"/>
    <property type="gene ID" value="ENSG00000159212.13"/>
</dbReference>
<dbReference type="Ensembl" id="ENST00000360731.7">
    <molecule id="Q96NY7-1"/>
    <property type="protein sequence ID" value="ENSP00000353959.3"/>
    <property type="gene ID" value="ENSG00000159212.13"/>
</dbReference>
<dbReference type="GeneID" id="54102"/>
<dbReference type="KEGG" id="hsa:54102"/>
<dbReference type="MANE-Select" id="ENST00000349499.3">
    <molecule id="Q96NY7-2"/>
    <property type="protein sequence ID" value="ENSP00000290332.4"/>
    <property type="RefSeq nucleotide sequence ID" value="NM_053277.3"/>
    <property type="RefSeq protein sequence ID" value="NP_444507.1"/>
</dbReference>
<dbReference type="UCSC" id="uc002yuf.2">
    <molecule id="Q96NY7-1"/>
    <property type="organism name" value="human"/>
</dbReference>
<dbReference type="AGR" id="HGNC:2065"/>
<dbReference type="CTD" id="54102"/>
<dbReference type="DisGeNET" id="54102"/>
<dbReference type="GeneCards" id="CLIC6"/>
<dbReference type="HGNC" id="HGNC:2065">
    <property type="gene designation" value="CLIC6"/>
</dbReference>
<dbReference type="HPA" id="ENSG00000159212">
    <property type="expression patterns" value="Group enriched (choroid plexus, stomach)"/>
</dbReference>
<dbReference type="MIM" id="615321">
    <property type="type" value="gene"/>
</dbReference>
<dbReference type="neXtProt" id="NX_Q96NY7"/>
<dbReference type="OpenTargets" id="ENSG00000159212"/>
<dbReference type="PharmGKB" id="PA26593"/>
<dbReference type="VEuPathDB" id="HostDB:ENSG00000159212"/>
<dbReference type="eggNOG" id="KOG1422">
    <property type="taxonomic scope" value="Eukaryota"/>
</dbReference>
<dbReference type="GeneTree" id="ENSGT00940000159602"/>
<dbReference type="HOGENOM" id="CLU_023994_0_0_1"/>
<dbReference type="InParanoid" id="Q96NY7"/>
<dbReference type="OMA" id="NMDTEAP"/>
<dbReference type="OrthoDB" id="1935530at2759"/>
<dbReference type="PAN-GO" id="Q96NY7">
    <property type="GO annotations" value="4 GO annotations based on evolutionary models"/>
</dbReference>
<dbReference type="PhylomeDB" id="Q96NY7"/>
<dbReference type="TreeFam" id="TF315438"/>
<dbReference type="PathwayCommons" id="Q96NY7"/>
<dbReference type="SignaLink" id="Q96NY7"/>
<dbReference type="BioGRID-ORCS" id="54102">
    <property type="hits" value="11 hits in 1145 CRISPR screens"/>
</dbReference>
<dbReference type="ChiTaRS" id="CLIC6">
    <property type="organism name" value="human"/>
</dbReference>
<dbReference type="GeneWiki" id="CLIC6"/>
<dbReference type="GenomeRNAi" id="54102"/>
<dbReference type="Pharos" id="Q96NY7">
    <property type="development level" value="Tbio"/>
</dbReference>
<dbReference type="PRO" id="PR:Q96NY7"/>
<dbReference type="Proteomes" id="UP000005640">
    <property type="component" value="Chromosome 21"/>
</dbReference>
<dbReference type="RNAct" id="Q96NY7">
    <property type="molecule type" value="protein"/>
</dbReference>
<dbReference type="Bgee" id="ENSG00000159212">
    <property type="expression patterns" value="Expressed in pigmented layer of retina and 133 other cell types or tissues"/>
</dbReference>
<dbReference type="GO" id="GO:0034707">
    <property type="term" value="C:chloride channel complex"/>
    <property type="evidence" value="ECO:0007669"/>
    <property type="project" value="UniProtKB-KW"/>
</dbReference>
<dbReference type="GO" id="GO:0005737">
    <property type="term" value="C:cytoplasm"/>
    <property type="evidence" value="ECO:0007669"/>
    <property type="project" value="UniProtKB-SubCell"/>
</dbReference>
<dbReference type="GO" id="GO:0070062">
    <property type="term" value="C:extracellular exosome"/>
    <property type="evidence" value="ECO:0007005"/>
    <property type="project" value="UniProtKB"/>
</dbReference>
<dbReference type="GO" id="GO:0005886">
    <property type="term" value="C:plasma membrane"/>
    <property type="evidence" value="ECO:0007669"/>
    <property type="project" value="UniProtKB-SubCell"/>
</dbReference>
<dbReference type="GO" id="GO:0005254">
    <property type="term" value="F:chloride channel activity"/>
    <property type="evidence" value="ECO:0000314"/>
    <property type="project" value="UniProtKB"/>
</dbReference>
<dbReference type="GO" id="GO:0031749">
    <property type="term" value="F:D2 dopamine receptor binding"/>
    <property type="evidence" value="ECO:0000318"/>
    <property type="project" value="GO_Central"/>
</dbReference>
<dbReference type="GO" id="GO:0031750">
    <property type="term" value="F:D3 dopamine receptor binding"/>
    <property type="evidence" value="ECO:0000318"/>
    <property type="project" value="GO_Central"/>
</dbReference>
<dbReference type="GO" id="GO:0031751">
    <property type="term" value="F:D4 dopamine receptor binding"/>
    <property type="evidence" value="ECO:0000318"/>
    <property type="project" value="GO_Central"/>
</dbReference>
<dbReference type="GO" id="GO:0016491">
    <property type="term" value="F:oxidoreductase activity"/>
    <property type="evidence" value="ECO:0007669"/>
    <property type="project" value="UniProtKB-KW"/>
</dbReference>
<dbReference type="CDD" id="cd10301">
    <property type="entry name" value="GST_C_CLIC6"/>
    <property type="match status" value="1"/>
</dbReference>
<dbReference type="CDD" id="cd03061">
    <property type="entry name" value="GST_N_CLIC"/>
    <property type="match status" value="1"/>
</dbReference>
<dbReference type="FunFam" id="1.20.1050.10:FF:000001">
    <property type="entry name" value="Chloride intracellular channel 2"/>
    <property type="match status" value="1"/>
</dbReference>
<dbReference type="FunFam" id="3.40.30.10:FF:000021">
    <property type="entry name" value="Chloride intracellular channel 4"/>
    <property type="match status" value="1"/>
</dbReference>
<dbReference type="Gene3D" id="1.20.1050.10">
    <property type="match status" value="1"/>
</dbReference>
<dbReference type="Gene3D" id="3.40.30.10">
    <property type="entry name" value="Glutaredoxin"/>
    <property type="match status" value="1"/>
</dbReference>
<dbReference type="InterPro" id="IPR002946">
    <property type="entry name" value="CLIC"/>
</dbReference>
<dbReference type="InterPro" id="IPR053823">
    <property type="entry name" value="CLIC_N"/>
</dbReference>
<dbReference type="InterPro" id="IPR010987">
    <property type="entry name" value="Glutathione-S-Trfase_C-like"/>
</dbReference>
<dbReference type="InterPro" id="IPR036282">
    <property type="entry name" value="Glutathione-S-Trfase_C_sf"/>
</dbReference>
<dbReference type="InterPro" id="IPR040079">
    <property type="entry name" value="Glutathione_S-Trfase"/>
</dbReference>
<dbReference type="InterPro" id="IPR036249">
    <property type="entry name" value="Thioredoxin-like_sf"/>
</dbReference>
<dbReference type="NCBIfam" id="TIGR00862">
    <property type="entry name" value="O-ClC"/>
    <property type="match status" value="1"/>
</dbReference>
<dbReference type="PANTHER" id="PTHR45476:SF1">
    <property type="entry name" value="CHLORIDE INTRACELLULAR CHANNEL PROTEIN 6"/>
    <property type="match status" value="1"/>
</dbReference>
<dbReference type="PANTHER" id="PTHR45476">
    <property type="entry name" value="CHLORIDE INTRACELLULAR CHANNEL PROTEIN 6-RELATED"/>
    <property type="match status" value="1"/>
</dbReference>
<dbReference type="Pfam" id="PF22441">
    <property type="entry name" value="CLIC-like_N"/>
    <property type="match status" value="1"/>
</dbReference>
<dbReference type="PRINTS" id="PR01263">
    <property type="entry name" value="INTCLCHANNEL"/>
</dbReference>
<dbReference type="SFLD" id="SFLDS00019">
    <property type="entry name" value="Glutathione_Transferase_(cytos"/>
    <property type="match status" value="1"/>
</dbReference>
<dbReference type="SFLD" id="SFLDG00358">
    <property type="entry name" value="Main_(cytGST)"/>
    <property type="match status" value="1"/>
</dbReference>
<dbReference type="SUPFAM" id="SSF47616">
    <property type="entry name" value="GST C-terminal domain-like"/>
    <property type="match status" value="1"/>
</dbReference>
<dbReference type="SUPFAM" id="SSF52833">
    <property type="entry name" value="Thioredoxin-like"/>
    <property type="match status" value="1"/>
</dbReference>
<dbReference type="PROSITE" id="PS50405">
    <property type="entry name" value="GST_CTER"/>
    <property type="match status" value="1"/>
</dbReference>
<gene>
    <name evidence="15 17" type="primary">CLIC6</name>
    <name type="synonym">CLIC1L</name>
</gene>
<comment type="function">
    <text evidence="4 5 10">In the soluble state, catalyzes glutaredoxin-like thiol disulfide exchange reactions with reduced glutathione as electron donor (By similarity). Can insert into membranes and form voltage-dependent chloride-selective channels. The channel opens upon membrane depolarization at positive voltages and closes at negative membrane voltages (PubMed:37838179). May play a critical role in water-secreting cells, possibly through the regulation of chloride ion transport (By similarity).</text>
</comment>
<comment type="catalytic activity">
    <reaction evidence="10">
        <text>chloride(in) = chloride(out)</text>
        <dbReference type="Rhea" id="RHEA:29823"/>
        <dbReference type="ChEBI" id="CHEBI:17996"/>
    </reaction>
</comment>
<comment type="activity regulation">
    <text evidence="10">Channel activity is redox- and pH-regulated. Inhibited by IAA-94.</text>
</comment>
<comment type="subunit">
    <text evidence="2 3">Monomer (soluble state) (By similarity). Interacts with dopamine receptors DRD2, DRD3 and DRD4 (By similarity).</text>
</comment>
<comment type="subcellular location">
    <subcellularLocation>
        <location evidence="1">Cytoplasm</location>
    </subcellularLocation>
    <subcellularLocation>
        <location evidence="1">Cell membrane</location>
        <topology evidence="1">Single-pass membrane protein</topology>
    </subcellularLocation>
    <text evidence="1">Predominantly cytoplasmic. Upon chloride ion efflux from the cell, it is translocated to the plasma membrane (By similarity).</text>
</comment>
<comment type="alternative products">
    <event type="alternative splicing"/>
    <isoform>
        <id>Q96NY7-1</id>
        <name>B</name>
        <sequence type="displayed"/>
    </isoform>
    <isoform>
        <id>Q96NY7-2</id>
        <name>A</name>
        <sequence type="described" ref="VSP_008963"/>
    </isoform>
</comment>
<comment type="tissue specificity">
    <text evidence="9 10">Expressed in brain, placenta, pancreas, liver, lung, heart, kidney, liver, spleen, soleus muscle, and brown fat.</text>
</comment>
<comment type="domain">
    <text evidence="5">The active G-site contains a monothiol Cys-X-X-Ser motif which mediates glutathione-dependent redox catalysis.</text>
</comment>
<comment type="domain">
    <text evidence="5">Members of this family may change from a globular, soluble state to a state where the N-terminal domain is inserted into the membrane and functions as a chloride channel. The redox status of the active cysteine in Cys-X-X-Cys/Ser motif likely determines the capacity to adopt a soluble or membrane-inserted state. A conformation change of the N-terminal domain is thought to expose hydrophobic surfaces that trigger membrane insertion.</text>
</comment>
<comment type="PTM">
    <text evidence="4">Phosphorylated.</text>
</comment>
<comment type="similarity">
    <text evidence="16">Belongs to the chloride channel CLIC family.</text>
</comment>
<comment type="sequence caution" evidence="16">
    <conflict type="erroneous initiation">
        <sequence resource="EMBL-CDS" id="BAC03959"/>
    </conflict>
</comment>